<accession>Q5FFR4</accession>
<feature type="chain" id="PRO_0000131261" description="Large ribosomal subunit protein uL18">
    <location>
        <begin position="1"/>
        <end position="120"/>
    </location>
</feature>
<dbReference type="EMBL" id="CR925677">
    <property type="protein sequence ID" value="CAI28065.1"/>
    <property type="molecule type" value="Genomic_DNA"/>
</dbReference>
<dbReference type="RefSeq" id="WP_011155273.1">
    <property type="nucleotide sequence ID" value="NC_006831.1"/>
</dbReference>
<dbReference type="SMR" id="Q5FFR4"/>
<dbReference type="KEGG" id="erg:ERGA_CDS_06130"/>
<dbReference type="HOGENOM" id="CLU_098841_0_1_5"/>
<dbReference type="OrthoDB" id="9810939at2"/>
<dbReference type="Proteomes" id="UP000000533">
    <property type="component" value="Chromosome"/>
</dbReference>
<dbReference type="GO" id="GO:0022625">
    <property type="term" value="C:cytosolic large ribosomal subunit"/>
    <property type="evidence" value="ECO:0007669"/>
    <property type="project" value="TreeGrafter"/>
</dbReference>
<dbReference type="GO" id="GO:0008097">
    <property type="term" value="F:5S rRNA binding"/>
    <property type="evidence" value="ECO:0007669"/>
    <property type="project" value="TreeGrafter"/>
</dbReference>
<dbReference type="GO" id="GO:0003735">
    <property type="term" value="F:structural constituent of ribosome"/>
    <property type="evidence" value="ECO:0007669"/>
    <property type="project" value="InterPro"/>
</dbReference>
<dbReference type="GO" id="GO:0006412">
    <property type="term" value="P:translation"/>
    <property type="evidence" value="ECO:0007669"/>
    <property type="project" value="UniProtKB-UniRule"/>
</dbReference>
<dbReference type="CDD" id="cd00432">
    <property type="entry name" value="Ribosomal_L18_L5e"/>
    <property type="match status" value="1"/>
</dbReference>
<dbReference type="Gene3D" id="3.30.420.100">
    <property type="match status" value="1"/>
</dbReference>
<dbReference type="HAMAP" id="MF_01337_B">
    <property type="entry name" value="Ribosomal_uL18_B"/>
    <property type="match status" value="1"/>
</dbReference>
<dbReference type="InterPro" id="IPR004389">
    <property type="entry name" value="Ribosomal_uL18_bac-type"/>
</dbReference>
<dbReference type="InterPro" id="IPR005484">
    <property type="entry name" value="Ribosomal_uL18_bac/euk"/>
</dbReference>
<dbReference type="PANTHER" id="PTHR12899">
    <property type="entry name" value="39S RIBOSOMAL PROTEIN L18, MITOCHONDRIAL"/>
    <property type="match status" value="1"/>
</dbReference>
<dbReference type="PANTHER" id="PTHR12899:SF3">
    <property type="entry name" value="LARGE RIBOSOMAL SUBUNIT PROTEIN UL18M"/>
    <property type="match status" value="1"/>
</dbReference>
<dbReference type="Pfam" id="PF00861">
    <property type="entry name" value="Ribosomal_L18p"/>
    <property type="match status" value="1"/>
</dbReference>
<dbReference type="SUPFAM" id="SSF53137">
    <property type="entry name" value="Translational machinery components"/>
    <property type="match status" value="1"/>
</dbReference>
<gene>
    <name evidence="1" type="primary">rplR</name>
    <name type="ordered locus">ERGA_CDS_06130</name>
</gene>
<comment type="function">
    <text evidence="1">This is one of the proteins that bind and probably mediate the attachment of the 5S RNA into the large ribosomal subunit, where it forms part of the central protuberance.</text>
</comment>
<comment type="subunit">
    <text evidence="1">Part of the 50S ribosomal subunit; part of the 5S rRNA/L5/L18/L25 subcomplex. Contacts the 5S and 23S rRNAs.</text>
</comment>
<comment type="similarity">
    <text evidence="1">Belongs to the universal ribosomal protein uL18 family.</text>
</comment>
<organism>
    <name type="scientific">Ehrlichia ruminantium (strain Gardel)</name>
    <dbReference type="NCBI Taxonomy" id="302409"/>
    <lineage>
        <taxon>Bacteria</taxon>
        <taxon>Pseudomonadati</taxon>
        <taxon>Pseudomonadota</taxon>
        <taxon>Alphaproteobacteria</taxon>
        <taxon>Rickettsiales</taxon>
        <taxon>Anaplasmataceae</taxon>
        <taxon>Ehrlichia</taxon>
    </lineage>
</organism>
<keyword id="KW-0687">Ribonucleoprotein</keyword>
<keyword id="KW-0689">Ribosomal protein</keyword>
<keyword id="KW-0694">RNA-binding</keyword>
<keyword id="KW-0699">rRNA-binding</keyword>
<sequence length="120" mass="14051">MLATSNRFERRKRRVRLKLKNNLSLLRLSIFKSNRHFYVQLIDDSCGKTYAAASTLEREVIALAHRRVNSNSVKIVAKLMSERLNKLDNCKKFVFDRGPYKYIGVVAEFANELRSYGFEF</sequence>
<proteinExistence type="inferred from homology"/>
<evidence type="ECO:0000255" key="1">
    <source>
        <dbReference type="HAMAP-Rule" id="MF_01337"/>
    </source>
</evidence>
<evidence type="ECO:0000305" key="2"/>
<name>RL18_EHRRG</name>
<reference key="1">
    <citation type="journal article" date="2006" name="J. Bacteriol.">
        <title>Comparative genomic analysis of three strains of Ehrlichia ruminantium reveals an active process of genome size plasticity.</title>
        <authorList>
            <person name="Frutos R."/>
            <person name="Viari A."/>
            <person name="Ferraz C."/>
            <person name="Morgat A."/>
            <person name="Eychenie S."/>
            <person name="Kandassamy Y."/>
            <person name="Chantal I."/>
            <person name="Bensaid A."/>
            <person name="Coissac E."/>
            <person name="Vachiery N."/>
            <person name="Demaille J."/>
            <person name="Martinez D."/>
        </authorList>
    </citation>
    <scope>NUCLEOTIDE SEQUENCE [LARGE SCALE GENOMIC DNA]</scope>
    <source>
        <strain>Gardel</strain>
    </source>
</reference>
<protein>
    <recommendedName>
        <fullName evidence="1">Large ribosomal subunit protein uL18</fullName>
    </recommendedName>
    <alternativeName>
        <fullName evidence="2">50S ribosomal protein L18</fullName>
    </alternativeName>
</protein>